<protein>
    <recommendedName>
        <fullName evidence="1">2-oxoglutarate dehydrogenase E1 component</fullName>
        <ecNumber evidence="1">1.2.4.2</ecNumber>
    </recommendedName>
    <alternativeName>
        <fullName evidence="1">Alpha-ketoglutarate dehydrogenase</fullName>
    </alternativeName>
</protein>
<accession>Q4L6C4</accession>
<name>ODO1_STAHJ</name>
<feature type="chain" id="PRO_0000162184" description="2-oxoglutarate dehydrogenase E1 component">
    <location>
        <begin position="1"/>
        <end position="934"/>
    </location>
</feature>
<feature type="region of interest" description="Disordered" evidence="2">
    <location>
        <begin position="515"/>
        <end position="544"/>
    </location>
</feature>
<feature type="compositionally biased region" description="Basic and acidic residues" evidence="2">
    <location>
        <begin position="515"/>
        <end position="537"/>
    </location>
</feature>
<evidence type="ECO:0000255" key="1">
    <source>
        <dbReference type="HAMAP-Rule" id="MF_01169"/>
    </source>
</evidence>
<evidence type="ECO:0000256" key="2">
    <source>
        <dbReference type="SAM" id="MobiDB-lite"/>
    </source>
</evidence>
<proteinExistence type="inferred from homology"/>
<comment type="function">
    <text evidence="1">E1 component of the 2-oxoglutarate dehydrogenase (OGDH) complex which catalyzes the decarboxylation of 2-oxoglutarate, the first step in the conversion of 2-oxoglutarate to succinyl-CoA and CO(2).</text>
</comment>
<comment type="catalytic activity">
    <reaction evidence="1">
        <text>N(6)-[(R)-lipoyl]-L-lysyl-[protein] + 2-oxoglutarate + H(+) = N(6)-[(R)-S(8)-succinyldihydrolipoyl]-L-lysyl-[protein] + CO2</text>
        <dbReference type="Rhea" id="RHEA:12188"/>
        <dbReference type="Rhea" id="RHEA-COMP:10474"/>
        <dbReference type="Rhea" id="RHEA-COMP:20092"/>
        <dbReference type="ChEBI" id="CHEBI:15378"/>
        <dbReference type="ChEBI" id="CHEBI:16526"/>
        <dbReference type="ChEBI" id="CHEBI:16810"/>
        <dbReference type="ChEBI" id="CHEBI:83099"/>
        <dbReference type="ChEBI" id="CHEBI:83120"/>
        <dbReference type="EC" id="1.2.4.2"/>
    </reaction>
</comment>
<comment type="cofactor">
    <cofactor evidence="1">
        <name>thiamine diphosphate</name>
        <dbReference type="ChEBI" id="CHEBI:58937"/>
    </cofactor>
</comment>
<comment type="subunit">
    <text evidence="1">Homodimer. Part of the 2-oxoglutarate dehydrogenase (OGDH) complex composed of E1 (2-oxoglutarate dehydrogenase), E2 (dihydrolipoamide succinyltransferase) and E3 (dihydrolipoamide dehydrogenase); the complex contains multiple copies of the three enzymatic components (E1, E2 and E3).</text>
</comment>
<comment type="similarity">
    <text evidence="1">Belongs to the alpha-ketoglutarate dehydrogenase family.</text>
</comment>
<dbReference type="EC" id="1.2.4.2" evidence="1"/>
<dbReference type="EMBL" id="AP006716">
    <property type="protein sequence ID" value="BAE04801.1"/>
    <property type="molecule type" value="Genomic_DNA"/>
</dbReference>
<dbReference type="RefSeq" id="WP_011275787.1">
    <property type="nucleotide sequence ID" value="NC_007168.1"/>
</dbReference>
<dbReference type="SMR" id="Q4L6C4"/>
<dbReference type="KEGG" id="sha:SH1492"/>
<dbReference type="eggNOG" id="COG0567">
    <property type="taxonomic scope" value="Bacteria"/>
</dbReference>
<dbReference type="HOGENOM" id="CLU_004709_1_0_9"/>
<dbReference type="OrthoDB" id="9759785at2"/>
<dbReference type="Proteomes" id="UP000000543">
    <property type="component" value="Chromosome"/>
</dbReference>
<dbReference type="GO" id="GO:0005829">
    <property type="term" value="C:cytosol"/>
    <property type="evidence" value="ECO:0007669"/>
    <property type="project" value="TreeGrafter"/>
</dbReference>
<dbReference type="GO" id="GO:0045252">
    <property type="term" value="C:oxoglutarate dehydrogenase complex"/>
    <property type="evidence" value="ECO:0007669"/>
    <property type="project" value="TreeGrafter"/>
</dbReference>
<dbReference type="GO" id="GO:0004591">
    <property type="term" value="F:oxoglutarate dehydrogenase (succinyl-transferring) activity"/>
    <property type="evidence" value="ECO:0007669"/>
    <property type="project" value="UniProtKB-UniRule"/>
</dbReference>
<dbReference type="GO" id="GO:0030976">
    <property type="term" value="F:thiamine pyrophosphate binding"/>
    <property type="evidence" value="ECO:0007669"/>
    <property type="project" value="UniProtKB-UniRule"/>
</dbReference>
<dbReference type="GO" id="GO:0006096">
    <property type="term" value="P:glycolytic process"/>
    <property type="evidence" value="ECO:0007669"/>
    <property type="project" value="UniProtKB-UniRule"/>
</dbReference>
<dbReference type="GO" id="GO:0006099">
    <property type="term" value="P:tricarboxylic acid cycle"/>
    <property type="evidence" value="ECO:0007669"/>
    <property type="project" value="TreeGrafter"/>
</dbReference>
<dbReference type="CDD" id="cd02016">
    <property type="entry name" value="TPP_E1_OGDC_like"/>
    <property type="match status" value="1"/>
</dbReference>
<dbReference type="FunFam" id="3.40.50.970:FF:000036">
    <property type="entry name" value="2-oxoglutarate dehydrogenase E1 component"/>
    <property type="match status" value="1"/>
</dbReference>
<dbReference type="Gene3D" id="3.40.50.12470">
    <property type="match status" value="1"/>
</dbReference>
<dbReference type="Gene3D" id="3.40.50.970">
    <property type="match status" value="1"/>
</dbReference>
<dbReference type="Gene3D" id="3.40.50.11610">
    <property type="entry name" value="Multifunctional 2-oxoglutarate metabolism enzyme, C-terminal domain"/>
    <property type="match status" value="1"/>
</dbReference>
<dbReference type="Gene3D" id="1.10.287.1150">
    <property type="entry name" value="TPP helical domain"/>
    <property type="match status" value="1"/>
</dbReference>
<dbReference type="HAMAP" id="MF_01169">
    <property type="entry name" value="SucA_OdhA"/>
    <property type="match status" value="1"/>
</dbReference>
<dbReference type="InterPro" id="IPR011603">
    <property type="entry name" value="2oxoglutarate_DH_E1"/>
</dbReference>
<dbReference type="InterPro" id="IPR023784">
    <property type="entry name" value="2oxoglutarate_DH_E1_bac"/>
</dbReference>
<dbReference type="InterPro" id="IPR001017">
    <property type="entry name" value="DH_E1"/>
</dbReference>
<dbReference type="InterPro" id="IPR042179">
    <property type="entry name" value="KGD_C_sf"/>
</dbReference>
<dbReference type="InterPro" id="IPR031717">
    <property type="entry name" value="ODO-1/KGD_C"/>
</dbReference>
<dbReference type="InterPro" id="IPR029061">
    <property type="entry name" value="THDP-binding"/>
</dbReference>
<dbReference type="InterPro" id="IPR005475">
    <property type="entry name" value="Transketolase-like_Pyr-bd"/>
</dbReference>
<dbReference type="NCBIfam" id="TIGR00239">
    <property type="entry name" value="2oxo_dh_E1"/>
    <property type="match status" value="1"/>
</dbReference>
<dbReference type="NCBIfam" id="NF006914">
    <property type="entry name" value="PRK09404.1"/>
    <property type="match status" value="1"/>
</dbReference>
<dbReference type="NCBIfam" id="NF008907">
    <property type="entry name" value="PRK12270.1"/>
    <property type="match status" value="1"/>
</dbReference>
<dbReference type="PANTHER" id="PTHR23152:SF4">
    <property type="entry name" value="2-OXOADIPATE DEHYDROGENASE COMPLEX COMPONENT E1"/>
    <property type="match status" value="1"/>
</dbReference>
<dbReference type="PANTHER" id="PTHR23152">
    <property type="entry name" value="2-OXOGLUTARATE DEHYDROGENASE"/>
    <property type="match status" value="1"/>
</dbReference>
<dbReference type="Pfam" id="PF00676">
    <property type="entry name" value="E1_dh"/>
    <property type="match status" value="1"/>
</dbReference>
<dbReference type="Pfam" id="PF16870">
    <property type="entry name" value="OxoGdeHyase_C"/>
    <property type="match status" value="1"/>
</dbReference>
<dbReference type="Pfam" id="PF02779">
    <property type="entry name" value="Transket_pyr"/>
    <property type="match status" value="1"/>
</dbReference>
<dbReference type="PIRSF" id="PIRSF000157">
    <property type="entry name" value="Oxoglu_dh_E1"/>
    <property type="match status" value="1"/>
</dbReference>
<dbReference type="SMART" id="SM00861">
    <property type="entry name" value="Transket_pyr"/>
    <property type="match status" value="1"/>
</dbReference>
<dbReference type="SUPFAM" id="SSF52518">
    <property type="entry name" value="Thiamin diphosphate-binding fold (THDP-binding)"/>
    <property type="match status" value="2"/>
</dbReference>
<keyword id="KW-0324">Glycolysis</keyword>
<keyword id="KW-0560">Oxidoreductase</keyword>
<keyword id="KW-0786">Thiamine pyrophosphate</keyword>
<gene>
    <name evidence="1" type="primary">odhA</name>
    <name type="ordered locus">SH1492</name>
</gene>
<sequence length="934" mass="105479">MAKDNKDVTEAPVNFGANLGLMLDLYDDYLQDPSSVPDDLQVLFSTIKNGEAHVAAKSTTEGSGSSAGDGTIKRIMRLIDNIRQYGHLKADIYPVNAPKRTNLPKLEIEEFNLDKETLENVSAEIVSDHFKDIYDNAYEAIERMEKRYKGPIAFEYNHINNNKERTWLKRRIETPYRANINNDERKKLFDTLAHVEGFEKYLHKNFVGAKRFSIEGVDTLVPMLQHTLKRAAEIEINNIQIGMAHRGRLNVLTHVLEKPYEMMISEFMHTDPMKFLPEDGSLELTAGWTGDVKYHLGGVKTTSSYGIEQRISLANNPSHLEIVAPVVIGKTRASQDDTKHAGKPTTDFHKGMPIIIHGDAAYPGQGINFETMNLSNLDGYSTGGALHIITNNRIGFTTEPVDGRSTTYSTDIAKGYDVPILHVNADDVEATIEAIDIAMEFRKEFHKDFVIDLVGYRRYGHNEMDEPSITNPLPYHNIRKHDSVEIIYGNKLVEDGVISKEQMEDVMDKVQKEMRAAQDKIDKSDKMDNPDMERPESLQEPLQSDDKDFSVDHLKEINDAMLTYPEDFHVLKKLNKVLEKRREPFESENGLVDWAQAEQLAFATIVQDGISVRLTGQDSERGTFSHRHAVLHDEENGDTFTPLHHVPNQKATFEVHNSPLSEAAVVGFEYGYNVENKNSMNIWEAQYGDFSNMAQMMFDNFMSSARAKWGERSGLTLFLPHAFEGQGPEHSSARLERFLQLAAENNSTVVNLSSSSNYFHLLRAQAKSLGTEAMRPLIVMSPKSLLRNKTVAKPIDQFTSGGFKPIIVEDGNKEKVTKLVLASGKMFIDLKEHLAKNPDDSILLVAVDRLYPFPEGEIKEVLNELPNLETVSWVQEEPKNQGAWLFVYPYLKSLVGNQFNLSYHGRIQRAAPAEGDGEIHKLVQNQIIESSIEK</sequence>
<reference key="1">
    <citation type="journal article" date="2005" name="J. Bacteriol.">
        <title>Whole-genome sequencing of Staphylococcus haemolyticus uncovers the extreme plasticity of its genome and the evolution of human-colonizing staphylococcal species.</title>
        <authorList>
            <person name="Takeuchi F."/>
            <person name="Watanabe S."/>
            <person name="Baba T."/>
            <person name="Yuzawa H."/>
            <person name="Ito T."/>
            <person name="Morimoto Y."/>
            <person name="Kuroda M."/>
            <person name="Cui L."/>
            <person name="Takahashi M."/>
            <person name="Ankai A."/>
            <person name="Baba S."/>
            <person name="Fukui S."/>
            <person name="Lee J.C."/>
            <person name="Hiramatsu K."/>
        </authorList>
    </citation>
    <scope>NUCLEOTIDE SEQUENCE [LARGE SCALE GENOMIC DNA]</scope>
    <source>
        <strain>JCSC1435</strain>
    </source>
</reference>
<organism>
    <name type="scientific">Staphylococcus haemolyticus (strain JCSC1435)</name>
    <dbReference type="NCBI Taxonomy" id="279808"/>
    <lineage>
        <taxon>Bacteria</taxon>
        <taxon>Bacillati</taxon>
        <taxon>Bacillota</taxon>
        <taxon>Bacilli</taxon>
        <taxon>Bacillales</taxon>
        <taxon>Staphylococcaceae</taxon>
        <taxon>Staphylococcus</taxon>
    </lineage>
</organism>